<accession>P87160</accession>
<gene>
    <name type="primary">rhgA</name>
</gene>
<organism>
    <name type="scientific">Aspergillus niger</name>
    <dbReference type="NCBI Taxonomy" id="5061"/>
    <lineage>
        <taxon>Eukaryota</taxon>
        <taxon>Fungi</taxon>
        <taxon>Dikarya</taxon>
        <taxon>Ascomycota</taxon>
        <taxon>Pezizomycotina</taxon>
        <taxon>Eurotiomycetes</taxon>
        <taxon>Eurotiomycetidae</taxon>
        <taxon>Eurotiales</taxon>
        <taxon>Aspergillaceae</taxon>
        <taxon>Aspergillus</taxon>
        <taxon>Aspergillus subgen. Circumdati</taxon>
    </lineage>
</organism>
<sequence length="446" mass="47045">MPALPILALALAPLLVNGQLSGSVGPLTSAHSKAATKTCNVLDYGAVADNSTDIGSALSEAWDACSDGGLIYIPPGDYAMDTWVSLSGGKATAIILDGTIYRTGTDGGNMILVENSSDFELYSNSSSGAVQGFGYVYHREGDLDGPRILRLQDVSNFAVHDIILVDAPAFHFVMDDCSDGEVYNMAIRGGNSGGLDGIDVWGSNIWVHDVEVTNKDECVTVKGPANNILVESIYCNWSGGCAMGSLGADTDITDILYRNVYTWSSNQMYMIKSNGGSGTVNNTLLENFIGRGNRYSLDVDSYWSSMTAVDGDGVQLSNITFKNWKGTEADGAERGPIKVVCSDTAPCTDITIEDFAMWTESGDEQTYTCESAYGDGFCLEDSDSTTSYTTTQTVTTAPSGYSATTMAADLTTDFGTTASIPIPTIPTSFYPGLTAISPLASAATTA</sequence>
<reference key="1">
    <citation type="journal article" date="1997" name="Appl. Environ. Microbiol.">
        <title>Cloning and characterization of two rhamnogalacturonan hydrolase genes from Aspergillus niger.</title>
        <authorList>
            <person name="Suykerbuyk M.E."/>
            <person name="Kester H.C."/>
            <person name="Schaap P.J."/>
            <person name="Stam H."/>
            <person name="Musters W."/>
            <person name="Visser J."/>
        </authorList>
    </citation>
    <scope>NUCLEOTIDE SEQUENCE [GENOMIC DNA]</scope>
    <scope>FUNCTION</scope>
    <scope>BIOPHYSICOCHEMICAL PROPERTIES</scope>
    <source>
        <strain>ATCC 9029 / NRRL 3 / CBS 120.49 / DSM 2466 / N400 / FGSC 732</strain>
    </source>
</reference>
<name>RHGA_ASPNG</name>
<comment type="function">
    <text evidence="3">Pectinolytic enzymes consist of four classes of enzymes: pectine lyase, polygalacturonase, pectin methylesterase and rhamnogalacturonase. Hydrolyzes alpha-D-galacturonopyranosyl-(1,2)-alpha-L-rhamnopyranosyl linkages in the backbone of the hairy regions of pectins.</text>
</comment>
<comment type="catalytic activity">
    <reaction>
        <text>Endohydrolysis of alpha-D-GalA-(1-&gt;2)-alpha-L-Rha glycosidic bond in the rhamnogalacturonan I backbone with initial inversion of anomeric configuration releasing oligosaccharides with beta-D-GalA at the reducing end.</text>
        <dbReference type="EC" id="3.2.1.171"/>
    </reaction>
</comment>
<comment type="biophysicochemical properties">
    <phDependence>
        <text evidence="3">Optimum pH is 3.6.</text>
    </phDependence>
</comment>
<comment type="subcellular location">
    <subcellularLocation>
        <location evidence="1">Secreted</location>
    </subcellularLocation>
</comment>
<comment type="similarity">
    <text evidence="4">Belongs to the glycosyl hydrolase 28 family.</text>
</comment>
<feature type="signal peptide" evidence="2">
    <location>
        <begin position="1"/>
        <end position="18"/>
    </location>
</feature>
<feature type="chain" id="PRO_0000394383" description="Rhamnogalacturonase A">
    <location>
        <begin position="19"/>
        <end position="446"/>
    </location>
</feature>
<feature type="active site" description="Proton donor" evidence="1">
    <location>
        <position position="216"/>
    </location>
</feature>
<feature type="glycosylation site" description="N-linked (GlcNAc...) asparagine" evidence="2">
    <location>
        <position position="50"/>
    </location>
</feature>
<feature type="glycosylation site" description="N-linked (GlcNAc...) asparagine" evidence="2">
    <location>
        <position position="115"/>
    </location>
</feature>
<feature type="glycosylation site" description="N-linked (GlcNAc...) asparagine" evidence="2">
    <location>
        <position position="124"/>
    </location>
</feature>
<feature type="glycosylation site" description="N-linked (GlcNAc...) asparagine" evidence="2">
    <location>
        <position position="236"/>
    </location>
</feature>
<feature type="glycosylation site" description="N-linked (GlcNAc...) asparagine" evidence="2">
    <location>
        <position position="281"/>
    </location>
</feature>
<feature type="glycosylation site" description="N-linked (GlcNAc...) asparagine" evidence="2">
    <location>
        <position position="318"/>
    </location>
</feature>
<feature type="disulfide bond" evidence="1">
    <location>
        <begin position="39"/>
        <end position="65"/>
    </location>
</feature>
<feature type="disulfide bond" evidence="1">
    <location>
        <begin position="218"/>
        <end position="235"/>
    </location>
</feature>
<feature type="disulfide bond" evidence="1">
    <location>
        <begin position="341"/>
        <end position="347"/>
    </location>
</feature>
<feature type="disulfide bond" evidence="1">
    <location>
        <begin position="369"/>
        <end position="378"/>
    </location>
</feature>
<dbReference type="EC" id="3.2.1.171"/>
<dbReference type="EMBL" id="X94220">
    <property type="protein sequence ID" value="CAA63911.1"/>
    <property type="molecule type" value="Genomic_DNA"/>
</dbReference>
<dbReference type="SMR" id="P87160"/>
<dbReference type="CAZy" id="GH28">
    <property type="family name" value="Glycoside Hydrolase Family 28"/>
</dbReference>
<dbReference type="GlyCosmos" id="P87160">
    <property type="glycosylation" value="6 sites, No reported glycans"/>
</dbReference>
<dbReference type="PaxDb" id="5061-CADANGAP00009366"/>
<dbReference type="VEuPathDB" id="FungiDB:An12g00950"/>
<dbReference type="VEuPathDB" id="FungiDB:ASPNIDRAFT2_1118594"/>
<dbReference type="VEuPathDB" id="FungiDB:ATCC64974_39800"/>
<dbReference type="VEuPathDB" id="FungiDB:M747DRAFT_295514"/>
<dbReference type="eggNOG" id="ENOG502R2FT">
    <property type="taxonomic scope" value="Eukaryota"/>
</dbReference>
<dbReference type="BRENDA" id="3.2.1.171">
    <property type="organism ID" value="518"/>
</dbReference>
<dbReference type="GO" id="GO:0005576">
    <property type="term" value="C:extracellular region"/>
    <property type="evidence" value="ECO:0007669"/>
    <property type="project" value="UniProtKB-SubCell"/>
</dbReference>
<dbReference type="GO" id="GO:0004650">
    <property type="term" value="F:polygalacturonase activity"/>
    <property type="evidence" value="ECO:0007669"/>
    <property type="project" value="InterPro"/>
</dbReference>
<dbReference type="GO" id="GO:0046576">
    <property type="term" value="F:rhamnogalacturonan alpha-L-rhamnopyranosyl-(1-&gt;4)-alpha-D-galactopyranosyluronide lyase activity"/>
    <property type="evidence" value="ECO:0000314"/>
    <property type="project" value="UniProtKB"/>
</dbReference>
<dbReference type="GO" id="GO:0071555">
    <property type="term" value="P:cell wall organization"/>
    <property type="evidence" value="ECO:0007669"/>
    <property type="project" value="UniProtKB-KW"/>
</dbReference>
<dbReference type="GO" id="GO:0045490">
    <property type="term" value="P:pectin catabolic process"/>
    <property type="evidence" value="ECO:0000314"/>
    <property type="project" value="UniProtKB"/>
</dbReference>
<dbReference type="FunFam" id="2.160.20.10:FF:000025">
    <property type="entry name" value="Probable rhamnogalacturonase B"/>
    <property type="match status" value="1"/>
</dbReference>
<dbReference type="Gene3D" id="2.160.20.10">
    <property type="entry name" value="Single-stranded right-handed beta-helix, Pectin lyase-like"/>
    <property type="match status" value="1"/>
</dbReference>
<dbReference type="InterPro" id="IPR000743">
    <property type="entry name" value="Glyco_hydro_28"/>
</dbReference>
<dbReference type="InterPro" id="IPR012334">
    <property type="entry name" value="Pectin_lyas_fold"/>
</dbReference>
<dbReference type="InterPro" id="IPR011050">
    <property type="entry name" value="Pectin_lyase_fold/virulence"/>
</dbReference>
<dbReference type="InterPro" id="IPR024535">
    <property type="entry name" value="RHGA/B-epi-like_pectate_lyase"/>
</dbReference>
<dbReference type="PANTHER" id="PTHR31736">
    <property type="match status" value="1"/>
</dbReference>
<dbReference type="PANTHER" id="PTHR31736:SF19">
    <property type="entry name" value="PECTIN LYASE SUPERFAMILY PROTEIN-RELATED"/>
    <property type="match status" value="1"/>
</dbReference>
<dbReference type="Pfam" id="PF00295">
    <property type="entry name" value="Glyco_hydro_28"/>
    <property type="match status" value="1"/>
</dbReference>
<dbReference type="Pfam" id="PF12708">
    <property type="entry name" value="Pect-lyase_RHGA_epim"/>
    <property type="match status" value="1"/>
</dbReference>
<dbReference type="SUPFAM" id="SSF51126">
    <property type="entry name" value="Pectin lyase-like"/>
    <property type="match status" value="1"/>
</dbReference>
<evidence type="ECO:0000250" key="1"/>
<evidence type="ECO:0000255" key="2"/>
<evidence type="ECO:0000269" key="3">
    <source>
    </source>
</evidence>
<evidence type="ECO:0000305" key="4"/>
<proteinExistence type="evidence at protein level"/>
<keyword id="KW-0119">Carbohydrate metabolism</keyword>
<keyword id="KW-0961">Cell wall biogenesis/degradation</keyword>
<keyword id="KW-1015">Disulfide bond</keyword>
<keyword id="KW-0325">Glycoprotein</keyword>
<keyword id="KW-0326">Glycosidase</keyword>
<keyword id="KW-0378">Hydrolase</keyword>
<keyword id="KW-0624">Polysaccharide degradation</keyword>
<keyword id="KW-0964">Secreted</keyword>
<keyword id="KW-0732">Signal</keyword>
<protein>
    <recommendedName>
        <fullName>Rhamnogalacturonase A</fullName>
        <shortName>RGase A</shortName>
        <shortName>RHG A</shortName>
        <ecNumber>3.2.1.171</ecNumber>
    </recommendedName>
</protein>